<sequence>MQIFVKTLTGKTITLDVEASDTIENVKAKIQDKEGIPPDQQRLIFAGKQLEDGRTLSDYNIQKESTLHLVLRLRGGMQIFVKTLTGKTITLDVEASDTIENVKAKIQDKEGIPPDQQRLIFAGKQLEDGRTLSDYNIQKESTLHLVLRLRGGMQIFVKTLTGKTITLDVEASDTIENVKAKIQDKEGIPPDQQRLIFAGKQLEDGRTLSDYNIQKESTLHLVLRLRGGMQIFVKTLTGKTITLDVEASDTIENVKAKIQDKEGIPPDQQRLIFAGKQLEDGRTLSDYNIQKESTLHLVLRLRGGMQIFVKTLTGKTITLDVEASDTIENVKAKIQDKEGIPPDQQRLIFAGKQLEDGRTLSDYNIQKESTLHLVLRLRGGQ</sequence>
<feature type="chain" id="PRO_0000396362" description="Ubiquitin">
    <location>
        <begin position="1"/>
        <end position="76"/>
    </location>
</feature>
<feature type="chain" id="PRO_0000396363" description="Ubiquitin">
    <location>
        <begin position="77"/>
        <end position="152"/>
    </location>
</feature>
<feature type="chain" id="PRO_0000396364" description="Ubiquitin">
    <location>
        <begin position="153"/>
        <end position="228"/>
    </location>
</feature>
<feature type="chain" id="PRO_0000396365" description="Ubiquitin">
    <location>
        <begin position="229"/>
        <end position="304"/>
    </location>
</feature>
<feature type="chain" id="PRO_0000396366" description="Ubiquitin">
    <location>
        <begin position="305"/>
        <end position="380"/>
    </location>
</feature>
<feature type="propeptide" id="PRO_0000396367">
    <location>
        <position position="381"/>
    </location>
</feature>
<feature type="domain" description="Ubiquitin-like 1" evidence="2">
    <location>
        <begin position="1"/>
        <end position="76"/>
    </location>
</feature>
<feature type="domain" description="Ubiquitin-like 2" evidence="2">
    <location>
        <begin position="77"/>
        <end position="152"/>
    </location>
</feature>
<feature type="domain" description="Ubiquitin-like 3" evidence="2">
    <location>
        <begin position="153"/>
        <end position="228"/>
    </location>
</feature>
<feature type="domain" description="Ubiquitin-like 4" evidence="2">
    <location>
        <begin position="229"/>
        <end position="304"/>
    </location>
</feature>
<feature type="domain" description="Ubiquitin-like 5" evidence="2">
    <location>
        <begin position="305"/>
        <end position="380"/>
    </location>
</feature>
<feature type="cross-link" description="Glycyl lysine isopeptide (Lys-Gly) (interchain with G-Cter in ubiquitin)" evidence="1">
    <location>
        <position position="48"/>
    </location>
</feature>
<feature type="cross-link" description="Glycyl lysine isopeptide (Gly-Lys) (interchain with K-? in acceptor proteins)" evidence="2">
    <location>
        <position position="76"/>
    </location>
</feature>
<feature type="sequence conflict" description="In Ref. 2; AAA56861." evidence="3" ref="2">
    <original>M</original>
    <variation>S</variation>
    <location>
        <position position="77"/>
    </location>
</feature>
<evidence type="ECO:0000250" key="1"/>
<evidence type="ECO:0000255" key="2">
    <source>
        <dbReference type="PROSITE-ProRule" id="PRU00214"/>
    </source>
</evidence>
<evidence type="ECO:0000305" key="3"/>
<name>UBIQP_TETPY</name>
<comment type="function">
    <text evidence="1">Ubiquitin exists either covalently attached to another protein, or free (unanchored). When covalently bound, it is conjugated to target proteins via an isopeptide bond either as a monomer (monoubiquitin), a polymer linked via different Lys residues of the ubiquitin (polyubiquitin chains) or a linear polymer linked via the initiator Met of the ubiquitin (linear polyubiquitin chains). Polyubiquitin chains, when attached to a target protein, have different functions depending on the Lys residue of the ubiquitin that is linked: Lys-48-linked is involved in protein degradation via the proteasome. Linear polymer chains formed via attachment by the initiator Met lead to cell signaling. Ubiquitin is usually conjugated to Lys residues of target proteins, however, in rare cases, conjugation to Cys or Ser residues has been observed. When polyubiquitin is free (unanchored-polyubiquitin), it also has distinct roles, such as in activation of protein kinases, and in signaling (By similarity).</text>
</comment>
<comment type="subcellular location">
    <subcellularLocation>
        <location evidence="1">Cytoplasm</location>
    </subcellularLocation>
    <subcellularLocation>
        <location evidence="1">Nucleus</location>
    </subcellularLocation>
</comment>
<comment type="miscellaneous">
    <text>Ubiquitin is generally synthesized as a polyubiquitin precursor. Some ubiquitin genes contain a single copy of ubiquitin fused to a ribosomal protein.</text>
</comment>
<comment type="miscellaneous">
    <text>For the sake of clarity sequence features are annotated only for the first chain, and are not repeated for each of the following chains.</text>
</comment>
<comment type="similarity">
    <text evidence="3">Belongs to the ubiquitin family.</text>
</comment>
<proteinExistence type="inferred from homology"/>
<dbReference type="EMBL" id="X61053">
    <property type="protein sequence ID" value="CAA43387.1"/>
    <property type="molecule type" value="Genomic_DNA"/>
</dbReference>
<dbReference type="EMBL" id="M24081">
    <property type="protein sequence ID" value="AAA56861.1"/>
    <property type="molecule type" value="Genomic_DNA"/>
</dbReference>
<dbReference type="PIR" id="JT0491">
    <property type="entry name" value="JT0491"/>
</dbReference>
<dbReference type="PIR" id="S25848">
    <property type="entry name" value="S25848"/>
</dbReference>
<dbReference type="SMR" id="P0CG82"/>
<dbReference type="GO" id="GO:0005737">
    <property type="term" value="C:cytoplasm"/>
    <property type="evidence" value="ECO:0007669"/>
    <property type="project" value="UniProtKB-SubCell"/>
</dbReference>
<dbReference type="GO" id="GO:0005634">
    <property type="term" value="C:nucleus"/>
    <property type="evidence" value="ECO:0007669"/>
    <property type="project" value="UniProtKB-SubCell"/>
</dbReference>
<dbReference type="CDD" id="cd01803">
    <property type="entry name" value="Ubl_ubiquitin"/>
    <property type="match status" value="5"/>
</dbReference>
<dbReference type="FunFam" id="3.10.20.90:FF:000158">
    <property type="entry name" value="Polyubiquitin 5"/>
    <property type="match status" value="3"/>
</dbReference>
<dbReference type="FunFam" id="3.10.20.90:FF:000014">
    <property type="entry name" value="Ubiquitin-60S ribosomal L40 fusion"/>
    <property type="match status" value="2"/>
</dbReference>
<dbReference type="Gene3D" id="3.10.20.90">
    <property type="entry name" value="Phosphatidylinositol 3-kinase Catalytic Subunit, Chain A, domain 1"/>
    <property type="match status" value="5"/>
</dbReference>
<dbReference type="InterPro" id="IPR000626">
    <property type="entry name" value="Ubiquitin-like_dom"/>
</dbReference>
<dbReference type="InterPro" id="IPR029071">
    <property type="entry name" value="Ubiquitin-like_domsf"/>
</dbReference>
<dbReference type="InterPro" id="IPR019954">
    <property type="entry name" value="Ubiquitin_CS"/>
</dbReference>
<dbReference type="InterPro" id="IPR019956">
    <property type="entry name" value="Ubiquitin_dom"/>
</dbReference>
<dbReference type="InterPro" id="IPR050158">
    <property type="entry name" value="Ubiquitin_ubiquitin-like"/>
</dbReference>
<dbReference type="PANTHER" id="PTHR10666">
    <property type="entry name" value="UBIQUITIN"/>
    <property type="match status" value="1"/>
</dbReference>
<dbReference type="Pfam" id="PF00240">
    <property type="entry name" value="ubiquitin"/>
    <property type="match status" value="5"/>
</dbReference>
<dbReference type="PRINTS" id="PR00348">
    <property type="entry name" value="UBIQUITIN"/>
</dbReference>
<dbReference type="SMART" id="SM00213">
    <property type="entry name" value="UBQ"/>
    <property type="match status" value="5"/>
</dbReference>
<dbReference type="SUPFAM" id="SSF54236">
    <property type="entry name" value="Ubiquitin-like"/>
    <property type="match status" value="5"/>
</dbReference>
<dbReference type="PROSITE" id="PS00299">
    <property type="entry name" value="UBIQUITIN_1"/>
    <property type="match status" value="5"/>
</dbReference>
<dbReference type="PROSITE" id="PS50053">
    <property type="entry name" value="UBIQUITIN_2"/>
    <property type="match status" value="5"/>
</dbReference>
<keyword id="KW-0963">Cytoplasm</keyword>
<keyword id="KW-1017">Isopeptide bond</keyword>
<keyword id="KW-0539">Nucleus</keyword>
<keyword id="KW-0677">Repeat</keyword>
<keyword id="KW-0832">Ubl conjugation</keyword>
<organism>
    <name type="scientific">Tetrahymena pyriformis</name>
    <dbReference type="NCBI Taxonomy" id="5908"/>
    <lineage>
        <taxon>Eukaryota</taxon>
        <taxon>Sar</taxon>
        <taxon>Alveolata</taxon>
        <taxon>Ciliophora</taxon>
        <taxon>Intramacronucleata</taxon>
        <taxon>Oligohymenophorea</taxon>
        <taxon>Hymenostomatida</taxon>
        <taxon>Tetrahymenina</taxon>
        <taxon>Tetrahymenidae</taxon>
        <taxon>Tetrahymena</taxon>
    </lineage>
</organism>
<accession>P0CG82</accession>
<accession>P20685</accession>
<protein>
    <recommendedName>
        <fullName>Polyubiquitin</fullName>
    </recommendedName>
    <component>
        <recommendedName>
            <fullName>Ubiquitin</fullName>
        </recommendedName>
    </component>
</protein>
<reference key="1">
    <citation type="journal article" date="1991" name="DNA Seq.">
        <title>The macronuclear polyubiquitin gene of the ciliate Tetrahymena pyriformis.</title>
        <authorList>
            <person name="Neves A.M."/>
            <person name="Guerreiro P."/>
            <person name="Rodrigues-Pousada C."/>
        </authorList>
    </citation>
    <scope>NUCLEOTIDE SEQUENCE [GENOMIC DNA]</scope>
</reference>
<reference key="2">
    <citation type="journal article" date="1988" name="Gene">
        <title>Ubiquitin genes in Tetrahymena pyriformis and their expression during heat shock.</title>
        <authorList>
            <person name="Neves A.M."/>
            <person name="Barahona I."/>
            <person name="Galego L."/>
            <person name="Rodrigues-Pousada C."/>
        </authorList>
    </citation>
    <scope>NUCLEOTIDE SEQUENCE [GENOMIC DNA] OF 19-78</scope>
</reference>
<gene>
    <name type="primary">TU20</name>
</gene>